<gene>
    <name evidence="9" type="primary">ahpC</name>
    <name type="ordered locus">STM0608</name>
</gene>
<protein>
    <recommendedName>
        <fullName evidence="9">Alkyl hydroperoxide reductase C</fullName>
        <ecNumber evidence="5">1.11.1.26</ecNumber>
    </recommendedName>
    <alternativeName>
        <fullName evidence="10">Alkyl hydroperoxide reductase protein C22</fullName>
    </alternativeName>
    <alternativeName>
        <fullName>Peroxiredoxin</fullName>
    </alternativeName>
    <alternativeName>
        <fullName>Thioredoxin peroxidase</fullName>
    </alternativeName>
</protein>
<dbReference type="EC" id="1.11.1.26" evidence="5"/>
<dbReference type="EMBL" id="J05478">
    <property type="protein sequence ID" value="AAA16431.1"/>
    <property type="molecule type" value="Unassigned_DNA"/>
</dbReference>
<dbReference type="EMBL" id="AE006468">
    <property type="protein sequence ID" value="AAL19559.1"/>
    <property type="molecule type" value="Genomic_DNA"/>
</dbReference>
<dbReference type="PIR" id="A35441">
    <property type="entry name" value="A35441"/>
</dbReference>
<dbReference type="RefSeq" id="NP_459600.1">
    <property type="nucleotide sequence ID" value="NC_003197.2"/>
</dbReference>
<dbReference type="RefSeq" id="WP_000052802.1">
    <property type="nucleotide sequence ID" value="NC_003197.2"/>
</dbReference>
<dbReference type="PDB" id="1N8J">
    <property type="method" value="X-ray"/>
    <property type="resolution" value="2.17 A"/>
    <property type="chains" value="A/B/C/D/E/F/G/H/I/J/K/L/M/N/O/P/Q/R/S/T=2-187"/>
</dbReference>
<dbReference type="PDB" id="1YEP">
    <property type="method" value="X-ray"/>
    <property type="resolution" value="2.50 A"/>
    <property type="chains" value="A/B/C/D/E=2-187"/>
</dbReference>
<dbReference type="PDB" id="1YEX">
    <property type="method" value="X-ray"/>
    <property type="resolution" value="2.30 A"/>
    <property type="chains" value="A/B/C/D/E=2-187"/>
</dbReference>
<dbReference type="PDB" id="1YF0">
    <property type="method" value="X-ray"/>
    <property type="resolution" value="2.50 A"/>
    <property type="chains" value="A/B/C/D/E=2-187"/>
</dbReference>
<dbReference type="PDB" id="1YF1">
    <property type="method" value="X-ray"/>
    <property type="resolution" value="2.60 A"/>
    <property type="chains" value="A/B/C/D/E/F/G/H/I/J=2-187"/>
</dbReference>
<dbReference type="PDB" id="3EMP">
    <property type="method" value="X-ray"/>
    <property type="resolution" value="4.00 A"/>
    <property type="chains" value="A/B/C/D/E=2-187"/>
</dbReference>
<dbReference type="PDB" id="4MA9">
    <property type="method" value="X-ray"/>
    <property type="resolution" value="1.82 A"/>
    <property type="chains" value="A/B/C/D/E=2-187"/>
</dbReference>
<dbReference type="PDB" id="4MAB">
    <property type="method" value="X-ray"/>
    <property type="resolution" value="1.90 A"/>
    <property type="chains" value="A/B/C/D/E=2-187"/>
</dbReference>
<dbReference type="PDB" id="4XRA">
    <property type="method" value="X-ray"/>
    <property type="resolution" value="1.75 A"/>
    <property type="chains" value="A/B/C/D/E=2-187"/>
</dbReference>
<dbReference type="PDB" id="4XRD">
    <property type="method" value="X-ray"/>
    <property type="resolution" value="2.30 A"/>
    <property type="chains" value="A/B/C/D/E=2-187"/>
</dbReference>
<dbReference type="PDB" id="4XS1">
    <property type="method" value="X-ray"/>
    <property type="resolution" value="2.10 A"/>
    <property type="chains" value="A/B/C/D/E=2-187"/>
</dbReference>
<dbReference type="PDB" id="4XS4">
    <property type="method" value="X-ray"/>
    <property type="resolution" value="2.65 A"/>
    <property type="chains" value="A/B/C/D/E=2-187"/>
</dbReference>
<dbReference type="PDB" id="4XS6">
    <property type="method" value="X-ray"/>
    <property type="resolution" value="3.35 A"/>
    <property type="chains" value="A/B/C/D/E=2-187"/>
</dbReference>
<dbReference type="PDB" id="4XTS">
    <property type="method" value="X-ray"/>
    <property type="resolution" value="2.70 A"/>
    <property type="chains" value="A/B/C/D/E/F/G/H/I/J/K/L/M/N/O/P/Q/R/S/T=2-187"/>
</dbReference>
<dbReference type="PDB" id="5UKA">
    <property type="method" value="X-ray"/>
    <property type="resolution" value="1.90 A"/>
    <property type="chains" value="A/B/C/D/E=2-187"/>
</dbReference>
<dbReference type="PDBsum" id="1N8J"/>
<dbReference type="PDBsum" id="1YEP"/>
<dbReference type="PDBsum" id="1YEX"/>
<dbReference type="PDBsum" id="1YF0"/>
<dbReference type="PDBsum" id="1YF1"/>
<dbReference type="PDBsum" id="3EMP"/>
<dbReference type="PDBsum" id="4MA9"/>
<dbReference type="PDBsum" id="4MAB"/>
<dbReference type="PDBsum" id="4XRA"/>
<dbReference type="PDBsum" id="4XRD"/>
<dbReference type="PDBsum" id="4XS1"/>
<dbReference type="PDBsum" id="4XS4"/>
<dbReference type="PDBsum" id="4XS6"/>
<dbReference type="PDBsum" id="4XTS"/>
<dbReference type="PDBsum" id="5UKA"/>
<dbReference type="SMR" id="P0A251"/>
<dbReference type="STRING" id="99287.STM0608"/>
<dbReference type="PeroxiBase" id="4829">
    <property type="entry name" value="SetypAhpC"/>
</dbReference>
<dbReference type="PaxDb" id="99287-STM0608"/>
<dbReference type="GeneID" id="1252128"/>
<dbReference type="GeneID" id="84237451"/>
<dbReference type="KEGG" id="stm:STM0608"/>
<dbReference type="PATRIC" id="fig|99287.12.peg.640"/>
<dbReference type="HOGENOM" id="CLU_042529_21_3_6"/>
<dbReference type="OMA" id="NNFGVMR"/>
<dbReference type="PhylomeDB" id="P0A251"/>
<dbReference type="BioCyc" id="SENT99287:STM0608-MONOMER"/>
<dbReference type="BRENDA" id="1.11.1.24">
    <property type="organism ID" value="5542"/>
</dbReference>
<dbReference type="BRENDA" id="1.11.1.26">
    <property type="organism ID" value="5542"/>
</dbReference>
<dbReference type="EvolutionaryTrace" id="P0A251"/>
<dbReference type="PHI-base" id="PHI:11383"/>
<dbReference type="Proteomes" id="UP000001014">
    <property type="component" value="Chromosome"/>
</dbReference>
<dbReference type="GO" id="GO:0005829">
    <property type="term" value="C:cytosol"/>
    <property type="evidence" value="ECO:0000318"/>
    <property type="project" value="GO_Central"/>
</dbReference>
<dbReference type="GO" id="GO:0102039">
    <property type="term" value="F:NADH-dependent peroxiredoxin activity"/>
    <property type="evidence" value="ECO:0007669"/>
    <property type="project" value="UniProtKB-EC"/>
</dbReference>
<dbReference type="GO" id="GO:0008379">
    <property type="term" value="F:thioredoxin peroxidase activity"/>
    <property type="evidence" value="ECO:0000318"/>
    <property type="project" value="GO_Central"/>
</dbReference>
<dbReference type="GO" id="GO:0045454">
    <property type="term" value="P:cell redox homeostasis"/>
    <property type="evidence" value="ECO:0000318"/>
    <property type="project" value="GO_Central"/>
</dbReference>
<dbReference type="GO" id="GO:0042744">
    <property type="term" value="P:hydrogen peroxide catabolic process"/>
    <property type="evidence" value="ECO:0000318"/>
    <property type="project" value="GO_Central"/>
</dbReference>
<dbReference type="GO" id="GO:0006979">
    <property type="term" value="P:response to oxidative stress"/>
    <property type="evidence" value="ECO:0000318"/>
    <property type="project" value="GO_Central"/>
</dbReference>
<dbReference type="CDD" id="cd03015">
    <property type="entry name" value="PRX_Typ2cys"/>
    <property type="match status" value="1"/>
</dbReference>
<dbReference type="FunFam" id="3.40.30.10:FF:000002">
    <property type="entry name" value="Alkyl hydroperoxide reductase C"/>
    <property type="match status" value="1"/>
</dbReference>
<dbReference type="Gene3D" id="3.40.30.10">
    <property type="entry name" value="Glutaredoxin"/>
    <property type="match status" value="1"/>
</dbReference>
<dbReference type="InterPro" id="IPR017559">
    <property type="entry name" value="AhpC"/>
</dbReference>
<dbReference type="InterPro" id="IPR000866">
    <property type="entry name" value="AhpC/TSA"/>
</dbReference>
<dbReference type="InterPro" id="IPR050217">
    <property type="entry name" value="Peroxiredoxin"/>
</dbReference>
<dbReference type="InterPro" id="IPR024706">
    <property type="entry name" value="Peroxiredoxin_AhpC-typ"/>
</dbReference>
<dbReference type="InterPro" id="IPR019479">
    <property type="entry name" value="Peroxiredoxin_C"/>
</dbReference>
<dbReference type="InterPro" id="IPR036249">
    <property type="entry name" value="Thioredoxin-like_sf"/>
</dbReference>
<dbReference type="InterPro" id="IPR013766">
    <property type="entry name" value="Thioredoxin_domain"/>
</dbReference>
<dbReference type="NCBIfam" id="TIGR03137">
    <property type="entry name" value="AhpC"/>
    <property type="match status" value="1"/>
</dbReference>
<dbReference type="PANTHER" id="PTHR10681:SF121">
    <property type="entry name" value="ALKYL HYDROPEROXIDE REDUCTASE C"/>
    <property type="match status" value="1"/>
</dbReference>
<dbReference type="PANTHER" id="PTHR10681">
    <property type="entry name" value="THIOREDOXIN PEROXIDASE"/>
    <property type="match status" value="1"/>
</dbReference>
<dbReference type="Pfam" id="PF10417">
    <property type="entry name" value="1-cysPrx_C"/>
    <property type="match status" value="1"/>
</dbReference>
<dbReference type="Pfam" id="PF00578">
    <property type="entry name" value="AhpC-TSA"/>
    <property type="match status" value="1"/>
</dbReference>
<dbReference type="PIRSF" id="PIRSF000239">
    <property type="entry name" value="AHPC"/>
    <property type="match status" value="1"/>
</dbReference>
<dbReference type="SUPFAM" id="SSF52833">
    <property type="entry name" value="Thioredoxin-like"/>
    <property type="match status" value="1"/>
</dbReference>
<dbReference type="PROSITE" id="PS51352">
    <property type="entry name" value="THIOREDOXIN_2"/>
    <property type="match status" value="1"/>
</dbReference>
<proteinExistence type="evidence at protein level"/>
<sequence length="187" mass="20747">MSLINTKIKPFKNQAFKNGEFIEVTEKDTEGRWSVFFFYPADFTFVCPTELGDVADHYEELQKLGVDVYSVSTDTHFTHKAWHSSSETIAKIKYAMIGDPTGALTRNFDNMREDEGLADRATFVVDPQGIIQAIEVTAEGIGRDASDLLRKIKAAQYVAAHPGEVCPAKWKEGEATLAPSLDLVGKI</sequence>
<keyword id="KW-0002">3D-structure</keyword>
<keyword id="KW-0049">Antioxidant</keyword>
<keyword id="KW-0963">Cytoplasm</keyword>
<keyword id="KW-0903">Direct protein sequencing</keyword>
<keyword id="KW-1015">Disulfide bond</keyword>
<keyword id="KW-0560">Oxidoreductase</keyword>
<keyword id="KW-0575">Peroxidase</keyword>
<keyword id="KW-0676">Redox-active center</keyword>
<keyword id="KW-1185">Reference proteome</keyword>
<name>AHPC_SALTY</name>
<comment type="function">
    <text evidence="5 7">Thiol-specific peroxidase that catalyzes the reduction of hydrogen peroxide and organic hydroperoxides to water and alcohols, respectively. Plays a role in cell protection against oxidative stress by detoxifying peroxides.</text>
</comment>
<comment type="catalytic activity">
    <reaction evidence="5">
        <text>a hydroperoxide + NADH + H(+) = an alcohol + NAD(+) + H2O</text>
        <dbReference type="Rhea" id="RHEA:62628"/>
        <dbReference type="ChEBI" id="CHEBI:15377"/>
        <dbReference type="ChEBI" id="CHEBI:15378"/>
        <dbReference type="ChEBI" id="CHEBI:30879"/>
        <dbReference type="ChEBI" id="CHEBI:35924"/>
        <dbReference type="ChEBI" id="CHEBI:57540"/>
        <dbReference type="ChEBI" id="CHEBI:57945"/>
        <dbReference type="EC" id="1.11.1.26"/>
    </reaction>
</comment>
<comment type="biophysicochemical properties">
    <kinetics>
        <KM evidence="4">1.4 uM for H(2)O(2)</KM>
        <text evidence="4">kcat is 55.1 sec(-1) with H(2)O(2) as substrate.</text>
    </kinetics>
</comment>
<comment type="subunit">
    <text evidence="3 5 8">Homodimer; disulfide-linked, upon oxidation (PubMed:2643600, PubMed:8555198). 5 homodimers assemble to form a ring-like decamer (PubMed:11969410).</text>
</comment>
<comment type="subcellular location">
    <subcellularLocation>
        <location evidence="1">Cytoplasm</location>
    </subcellularLocation>
</comment>
<comment type="miscellaneous">
    <text evidence="6 13">The active site is a conserved redox-active cysteine residue, the peroxidatic cysteine (C(P)), which makes the nucleophilic attack on the peroxide substrate. The peroxide oxidizes the C(P)-SH to cysteine sulfenic acid (C(P)-SOH), which then reacts with another cysteine residue, the resolving cysteine (C(R)), to form a disulfide bridge. The disulfide is subsequently reduced by an appropriate electron donor to complete the catalytic cycle. In this typical 2-Cys peroxiredoxin, C(R) is provided by the other dimeric subunit to form an intersubunit disulfide. The disulfide is subsequently reduced by AhpF.</text>
</comment>
<comment type="similarity">
    <text evidence="11">Belongs to the peroxiredoxin family. AhpC/Prx1 subfamily.</text>
</comment>
<accession>P0A251</accession>
<accession>P19479</accession>
<organism>
    <name type="scientific">Salmonella typhimurium (strain LT2 / SGSC1412 / ATCC 700720)</name>
    <dbReference type="NCBI Taxonomy" id="99287"/>
    <lineage>
        <taxon>Bacteria</taxon>
        <taxon>Pseudomonadati</taxon>
        <taxon>Pseudomonadota</taxon>
        <taxon>Gammaproteobacteria</taxon>
        <taxon>Enterobacterales</taxon>
        <taxon>Enterobacteriaceae</taxon>
        <taxon>Salmonella</taxon>
    </lineage>
</organism>
<reference key="1">
    <citation type="journal article" date="1990" name="J. Biol. Chem.">
        <title>Alkyl hydroperoxide reductase from Salmonella typhimurium. Sequence and homology to thioredoxin reductase and other flavoprotein disulfide oxidoreductases.</title>
        <authorList>
            <person name="Tartaglia L.A."/>
            <person name="Storz G."/>
            <person name="Brodsky M.H."/>
            <person name="Lai A."/>
            <person name="Ames B.N."/>
        </authorList>
    </citation>
    <scope>NUCLEOTIDE SEQUENCE [GENOMIC DNA]</scope>
    <source>
        <strain>TN1379</strain>
    </source>
</reference>
<reference key="2">
    <citation type="journal article" date="1994" name="Proc. Natl. Acad. Sci. U.S.A.">
        <title>Cloning and sequencing of thiol-specific antioxidant from mammalian brain: alkyl hydroperoxide reductase and thiol-specific antioxidant define a large family of antioxidant enzymes.</title>
        <authorList>
            <person name="Chae H.Z."/>
            <person name="Robison K."/>
            <person name="Poole L.B."/>
            <person name="Church G."/>
            <person name="Storz G."/>
            <person name="Rhee S.G."/>
        </authorList>
    </citation>
    <scope>SEQUENCE REVISION TO C-TERMINUS</scope>
    <scope>FUNCTION</scope>
</reference>
<reference key="3">
    <citation type="journal article" date="2001" name="Nature">
        <title>Complete genome sequence of Salmonella enterica serovar Typhimurium LT2.</title>
        <authorList>
            <person name="McClelland M."/>
            <person name="Sanderson K.E."/>
            <person name="Spieth J."/>
            <person name="Clifton S.W."/>
            <person name="Latreille P."/>
            <person name="Courtney L."/>
            <person name="Porwollik S."/>
            <person name="Ali J."/>
            <person name="Dante M."/>
            <person name="Du F."/>
            <person name="Hou S."/>
            <person name="Layman D."/>
            <person name="Leonard S."/>
            <person name="Nguyen C."/>
            <person name="Scott K."/>
            <person name="Holmes A."/>
            <person name="Grewal N."/>
            <person name="Mulvaney E."/>
            <person name="Ryan E."/>
            <person name="Sun H."/>
            <person name="Florea L."/>
            <person name="Miller W."/>
            <person name="Stoneking T."/>
            <person name="Nhan M."/>
            <person name="Waterston R."/>
            <person name="Wilson R.K."/>
        </authorList>
    </citation>
    <scope>NUCLEOTIDE SEQUENCE [LARGE SCALE GENOMIC DNA]</scope>
    <source>
        <strain>LT2 / SGSC1412 / ATCC 700720</strain>
    </source>
</reference>
<reference key="4">
    <citation type="journal article" date="1989" name="J. Mol. Biol.">
        <title>Identification and molecular analysis of oxyR-regulated promoters important for the bacterial adaptation to oxidative stress.</title>
        <authorList>
            <person name="Tartaglia L.A."/>
            <person name="Storz G."/>
            <person name="Ames B.N."/>
        </authorList>
    </citation>
    <scope>NUCLEOTIDE SEQUENCE [GENOMIC DNA] OF 1-21</scope>
</reference>
<reference key="5">
    <citation type="journal article" date="1996" name="Biochemistry">
        <title>Flavin-dependent alkyl hydroperoxide reductase from Salmonella typhimurium. 1. Purification and enzymatic activities of overexpressed AhpF and AhpC proteins.</title>
        <authorList>
            <person name="Poole L.B."/>
            <person name="Ellis H.R."/>
        </authorList>
    </citation>
    <scope>PROTEIN SEQUENCE OF 2-33</scope>
    <scope>SUBUNIT</scope>
</reference>
<reference key="6">
    <citation type="journal article" date="1989" name="J. Biol. Chem.">
        <title>An alkyl hydroperoxide reductase from Salmonella typhimurium involved in the defense of DNA against oxidative damage. Purification and properties.</title>
        <authorList>
            <person name="Jacobson F.S."/>
            <person name="Morgan R.W."/>
            <person name="Christman M.F."/>
            <person name="Ames B.N."/>
        </authorList>
    </citation>
    <scope>PROTEIN SEQUENCE OF 2-25</scope>
    <scope>FUNCTION</scope>
    <scope>CATALYTIC ACTIVITY</scope>
    <scope>SUBUNIT</scope>
    <source>
        <strain>oxyR1</strain>
    </source>
</reference>
<reference key="7">
    <citation type="journal article" date="1995" name="J. Biol. Chem.">
        <title>Amphibacillus xylanus NADH oxidase and Salmonella typhimurium alkyl-hydroperoxide reductase flavoprotein components show extremely high scavenging activity for both alkyl hydroperoxide and hydrogen peroxide in the presence of S. typhimurium alkyl-hydroperoxide reductase 22-kDa protein component.</title>
        <authorList>
            <person name="Niimura Y."/>
            <person name="Poole L.B."/>
            <person name="Massey V."/>
        </authorList>
    </citation>
    <scope>REDUCTION BY AHPF</scope>
</reference>
<reference key="8">
    <citation type="journal article" date="2002" name="Biochemistry">
        <title>Dimers to doughnuts: redox-sensitive oligomerization of 2-cysteine peroxiredoxins.</title>
        <authorList>
            <person name="Wood Z.A."/>
            <person name="Poole L.B."/>
            <person name="Hantgan R.R."/>
            <person name="Karplus P.A."/>
        </authorList>
    </citation>
    <scope>X-RAY CRYSTALLOGRAPHY (2.5 ANGSTROMS)</scope>
    <scope>SUBUNIT</scope>
</reference>
<reference key="9">
    <citation type="journal article" date="2003" name="Science">
        <title>Peroxiredoxin evolution and the regulation of hydrogen peroxide signaling.</title>
        <authorList>
            <person name="Wood Z.A."/>
            <person name="Poole L.B."/>
            <person name="Karplus P.A."/>
        </authorList>
    </citation>
    <scope>X-RAY CRYSTALLOGRAPHY (2.17 ANGSTROMS) OF MUTANT SER-47</scope>
</reference>
<reference key="10">
    <citation type="journal article" date="2005" name="Biochemistry">
        <title>Analysis of the link between enzymatic activity and oligomeric state in AhpC, a bacterial peroxiredoxin.</title>
        <authorList>
            <person name="Parsonage D."/>
            <person name="Youngblood D.S."/>
            <person name="Sarma G.N."/>
            <person name="Wood Z.A."/>
            <person name="Karplus P.A."/>
            <person name="Poole L.B."/>
        </authorList>
    </citation>
    <scope>X-RAY CRYSTALLOGRAPHY (2.5 ANGSTROMS)</scope>
    <scope>DISULFIDE BONDS</scope>
    <scope>BIOPHYSICOCHEMICAL PROPERTIES</scope>
</reference>
<reference key="11">
    <citation type="journal article" date="2008" name="Biochemistry">
        <title>Cysteine pK(a) values for the bacterial peroxiredoxin AhpC.</title>
        <authorList>
            <person name="Nelson K.J."/>
            <person name="Parsonage D."/>
            <person name="Hall A."/>
            <person name="Karplus P.A."/>
            <person name="Poole L.B."/>
        </authorList>
    </citation>
    <scope>X-RAY CRYSTALLOGRAPHY (4.00 ANGSTROMS)</scope>
    <scope>ACTIVE SITE</scope>
</reference>
<reference key="12">
    <citation type="journal article" date="2013" name="Biochemistry">
        <title>The sensitive balance between the fully folded and locally unfolded conformations of a model peroxiredoxin.</title>
        <authorList>
            <person name="Perkins A."/>
            <person name="Nelson K.J."/>
            <person name="Williams J.R."/>
            <person name="Parsonage D."/>
            <person name="Poole L.B."/>
            <person name="Karplus P.A."/>
        </authorList>
    </citation>
    <scope>X-RAY CRYSTALLOGRAPHY (1.82 ANGSTROMS)</scope>
</reference>
<evidence type="ECO:0000250" key="1">
    <source>
        <dbReference type="UniProtKB" id="P0AE08"/>
    </source>
</evidence>
<evidence type="ECO:0000255" key="2">
    <source>
        <dbReference type="PROSITE-ProRule" id="PRU00691"/>
    </source>
</evidence>
<evidence type="ECO:0000269" key="3">
    <source>
    </source>
</evidence>
<evidence type="ECO:0000269" key="4">
    <source>
    </source>
</evidence>
<evidence type="ECO:0000269" key="5">
    <source>
    </source>
</evidence>
<evidence type="ECO:0000269" key="6">
    <source>
    </source>
</evidence>
<evidence type="ECO:0000269" key="7">
    <source>
    </source>
</evidence>
<evidence type="ECO:0000269" key="8">
    <source>
    </source>
</evidence>
<evidence type="ECO:0000303" key="9">
    <source>
    </source>
</evidence>
<evidence type="ECO:0000303" key="10">
    <source>
    </source>
</evidence>
<evidence type="ECO:0000305" key="11"/>
<evidence type="ECO:0000305" key="12">
    <source>
    </source>
</evidence>
<evidence type="ECO:0000305" key="13">
    <source>
    </source>
</evidence>
<evidence type="ECO:0007744" key="14">
    <source>
        <dbReference type="PDB" id="1YEP"/>
    </source>
</evidence>
<evidence type="ECO:0007744" key="15">
    <source>
        <dbReference type="PDB" id="1YEX"/>
    </source>
</evidence>
<evidence type="ECO:0007744" key="16">
    <source>
        <dbReference type="PDB" id="1YF0"/>
    </source>
</evidence>
<evidence type="ECO:0007744" key="17">
    <source>
        <dbReference type="PDB" id="1YF1"/>
    </source>
</evidence>
<evidence type="ECO:0007829" key="18">
    <source>
        <dbReference type="PDB" id="4MA9"/>
    </source>
</evidence>
<evidence type="ECO:0007829" key="19">
    <source>
        <dbReference type="PDB" id="4XRA"/>
    </source>
</evidence>
<evidence type="ECO:0007829" key="20">
    <source>
        <dbReference type="PDB" id="4XS1"/>
    </source>
</evidence>
<evidence type="ECO:0007829" key="21">
    <source>
        <dbReference type="PDB" id="4XS6"/>
    </source>
</evidence>
<evidence type="ECO:0007829" key="22">
    <source>
        <dbReference type="PDB" id="5UKA"/>
    </source>
</evidence>
<feature type="initiator methionine" description="Removed" evidence="5 8">
    <location>
        <position position="1"/>
    </location>
</feature>
<feature type="chain" id="PRO_0000135120" description="Alkyl hydroperoxide reductase C">
    <location>
        <begin position="2"/>
        <end position="187"/>
    </location>
</feature>
<feature type="domain" description="Thioredoxin" evidence="2">
    <location>
        <begin position="2"/>
        <end position="157"/>
    </location>
</feature>
<feature type="active site" description="Cysteine sulfenic acid (-SOH) intermediate" evidence="12">
    <location>
        <position position="47"/>
    </location>
</feature>
<feature type="disulfide bond" description="Interchain (with C-166); in linked form" evidence="4 14 15 16 17">
    <location>
        <position position="47"/>
    </location>
</feature>
<feature type="disulfide bond" description="Interchain (with C-47); in linked form" evidence="4 14 15 16 17">
    <location>
        <position position="166"/>
    </location>
</feature>
<feature type="sequence conflict" description="In Ref. 6; AA sequence." evidence="11" ref="6">
    <original>S</original>
    <variation>G</variation>
    <location>
        <position position="2"/>
    </location>
</feature>
<feature type="sequence conflict" description="In Ref. 6; AA sequence." evidence="11" ref="6">
    <original>N</original>
    <variation>D</variation>
    <location>
        <position position="5"/>
    </location>
</feature>
<feature type="sequence conflict" description="In Ref. 6; AA sequence." evidence="11" ref="6">
    <original>Q</original>
    <variation>N</variation>
    <location>
        <position position="14"/>
    </location>
</feature>
<feature type="sequence conflict" description="In Ref. 6; AA sequence." evidence="11" ref="6">
    <original>K</original>
    <variation>H</variation>
    <location>
        <position position="17"/>
    </location>
</feature>
<feature type="sequence conflict" description="In Ref. 6; AA sequence." evidence="11" ref="6">
    <original>E</original>
    <variation>H</variation>
    <location>
        <position position="20"/>
    </location>
</feature>
<feature type="sequence conflict" description="In Ref. 6; AA sequence." evidence="11" ref="6">
    <original>E</original>
    <variation>S</variation>
    <location>
        <position position="23"/>
    </location>
</feature>
<feature type="strand" evidence="19">
    <location>
        <begin position="12"/>
        <end position="17"/>
    </location>
</feature>
<feature type="strand" evidence="19">
    <location>
        <begin position="20"/>
        <end position="25"/>
    </location>
</feature>
<feature type="helix" evidence="19">
    <location>
        <begin position="26"/>
        <end position="29"/>
    </location>
</feature>
<feature type="strand" evidence="19">
    <location>
        <begin position="32"/>
        <end position="38"/>
    </location>
</feature>
<feature type="strand" evidence="18">
    <location>
        <begin position="42"/>
        <end position="45"/>
    </location>
</feature>
<feature type="helix" evidence="19">
    <location>
        <begin position="46"/>
        <end position="56"/>
    </location>
</feature>
<feature type="helix" evidence="19">
    <location>
        <begin position="58"/>
        <end position="63"/>
    </location>
</feature>
<feature type="strand" evidence="19">
    <location>
        <begin position="66"/>
        <end position="74"/>
    </location>
</feature>
<feature type="helix" evidence="19">
    <location>
        <begin position="76"/>
        <end position="85"/>
    </location>
</feature>
<feature type="helix" evidence="19">
    <location>
        <begin position="89"/>
        <end position="91"/>
    </location>
</feature>
<feature type="strand" evidence="19">
    <location>
        <begin position="94"/>
        <end position="98"/>
    </location>
</feature>
<feature type="helix" evidence="19">
    <location>
        <begin position="103"/>
        <end position="107"/>
    </location>
</feature>
<feature type="turn" evidence="19">
    <location>
        <begin position="113"/>
        <end position="115"/>
    </location>
</feature>
<feature type="strand" evidence="21">
    <location>
        <begin position="116"/>
        <end position="118"/>
    </location>
</feature>
<feature type="strand" evidence="19">
    <location>
        <begin position="120"/>
        <end position="125"/>
    </location>
</feature>
<feature type="strand" evidence="19">
    <location>
        <begin position="129"/>
        <end position="137"/>
    </location>
</feature>
<feature type="turn" evidence="22">
    <location>
        <begin position="139"/>
        <end position="141"/>
    </location>
</feature>
<feature type="helix" evidence="19">
    <location>
        <begin position="145"/>
        <end position="160"/>
    </location>
</feature>
<feature type="strand" evidence="20">
    <location>
        <begin position="161"/>
        <end position="163"/>
    </location>
</feature>
<feature type="turn" evidence="19">
    <location>
        <begin position="182"/>
        <end position="186"/>
    </location>
</feature>